<organism>
    <name type="scientific">Staphylococcus aureus (strain USA300)</name>
    <dbReference type="NCBI Taxonomy" id="367830"/>
    <lineage>
        <taxon>Bacteria</taxon>
        <taxon>Bacillati</taxon>
        <taxon>Bacillota</taxon>
        <taxon>Bacilli</taxon>
        <taxon>Bacillales</taxon>
        <taxon>Staphylococcaceae</taxon>
        <taxon>Staphylococcus</taxon>
    </lineage>
</organism>
<proteinExistence type="inferred from homology"/>
<name>TOP1_STAA3</name>
<protein>
    <recommendedName>
        <fullName evidence="1">DNA topoisomerase 1</fullName>
        <ecNumber evidence="1">5.6.2.1</ecNumber>
    </recommendedName>
    <alternativeName>
        <fullName evidence="1">DNA topoisomerase I</fullName>
    </alternativeName>
    <alternativeName>
        <fullName>Omega-protein</fullName>
    </alternativeName>
    <alternativeName>
        <fullName>Relaxing enzyme</fullName>
    </alternativeName>
    <alternativeName>
        <fullName>Swivelase</fullName>
    </alternativeName>
    <alternativeName>
        <fullName>Untwisting enzyme</fullName>
    </alternativeName>
</protein>
<gene>
    <name evidence="1" type="primary">topA</name>
    <name type="ordered locus">SAUSA300_1143</name>
</gene>
<accession>Q2FHI8</accession>
<comment type="function">
    <text evidence="1">Releases the supercoiling and torsional tension of DNA, which is introduced during the DNA replication and transcription, by transiently cleaving and rejoining one strand of the DNA duplex. Introduces a single-strand break via transesterification at a target site in duplex DNA. The scissile phosphodiester is attacked by the catalytic tyrosine of the enzyme, resulting in the formation of a DNA-(5'-phosphotyrosyl)-enzyme intermediate and the expulsion of a 3'-OH DNA strand. The free DNA strand then undergoes passage around the unbroken strand, thus removing DNA supercoils. Finally, in the religation step, the DNA 3'-OH attacks the covalent intermediate to expel the active-site tyrosine and restore the DNA phosphodiester backbone.</text>
</comment>
<comment type="catalytic activity">
    <reaction evidence="1">
        <text>ATP-independent breakage of single-stranded DNA, followed by passage and rejoining.</text>
        <dbReference type="EC" id="5.6.2.1"/>
    </reaction>
</comment>
<comment type="cofactor">
    <cofactor evidence="1">
        <name>Mg(2+)</name>
        <dbReference type="ChEBI" id="CHEBI:18420"/>
    </cofactor>
</comment>
<comment type="subunit">
    <text evidence="1">Monomer.</text>
</comment>
<comment type="similarity">
    <text evidence="1">Belongs to the type IA topoisomerase family.</text>
</comment>
<comment type="sequence caution" evidence="4">
    <conflict type="erroneous initiation">
        <sequence resource="EMBL-CDS" id="ABD21813"/>
    </conflict>
</comment>
<sequence>MADNLVIVESPAKAKTIEKYLGKKYKVIASMGHVRDLPRSQMGVDTEDNYEPKYITIRGKGPVVKELKKHAKKAKNVFLASDPDREGEAIAWHLSKILELEDSKENRVVFNEITKDAVKESFKNPREIEMNLVDAQQARRILDRLVGYNISPVLWKKVKKGLSAGRVQSVALRLVIDRENEIRNFKPEEYWTIEGEFRYKKSKFNAKFLHYKNKPFKLKTKKDVEKITAALDGDQFEITNVTKKEKTRNPANPFTTSTLQQEAARKLNFKARKTMMVAQQLYEGIDLKKQGTIGLITYMRTDSTRISDTAKVEAKQYITDKYGESYTSKRKASGKQGDQDAHEAIRPSSTMRTPDDMKSFLTKDQYRLYKLIWERFVASQMAPAILDTVSLDITQGDIKFRANGQTIKFKGFMTLYVETKDDSDSEKENKLPKLEQGDKVTATQIEPAQHYTQPPPRYTEARLVKTLEELKIGRPSTYAPTIDTIQKRNYVKLESKRFVPTELGEIVHEQVKEYFPEIIDVEFTVNMETLLDKIAEGDITWRKVIDGFFSSFKQDVERAEEEMEKIEIKDEPAGEDCEICGSPMVIKMGRYGKFMACSNFPDCRNTKAIVKSIGVKCPKCNDGDVVERKSKKNRVFYGCSKYPECDFISWDKPIGRDCPKCNQYLVENKKGKTTQVICSNCDYKEAAQK</sequence>
<feature type="chain" id="PRO_0000285943" description="DNA topoisomerase 1">
    <location>
        <begin position="1"/>
        <end position="689"/>
    </location>
</feature>
<feature type="domain" description="Toprim" evidence="1">
    <location>
        <begin position="3"/>
        <end position="113"/>
    </location>
</feature>
<feature type="domain" description="Topo IA-type catalytic" evidence="2">
    <location>
        <begin position="129"/>
        <end position="557"/>
    </location>
</feature>
<feature type="zinc finger region" description="C4-type 1">
    <location>
        <begin position="577"/>
        <end position="603"/>
    </location>
</feature>
<feature type="zinc finger region" description="C4-type 2">
    <location>
        <begin position="617"/>
        <end position="645"/>
    </location>
</feature>
<feature type="zinc finger region" description="C4-type 3">
    <location>
        <begin position="658"/>
        <end position="681"/>
    </location>
</feature>
<feature type="region of interest" description="Interaction with DNA" evidence="1">
    <location>
        <begin position="163"/>
        <end position="168"/>
    </location>
</feature>
<feature type="region of interest" description="Disordered" evidence="3">
    <location>
        <begin position="328"/>
        <end position="356"/>
    </location>
</feature>
<feature type="active site" description="O-(5'-phospho-DNA)-tyrosine intermediate" evidence="2">
    <location>
        <position position="298"/>
    </location>
</feature>
<feature type="binding site" evidence="1">
    <location>
        <position position="9"/>
    </location>
    <ligand>
        <name>Mg(2+)</name>
        <dbReference type="ChEBI" id="CHEBI:18420"/>
        <note>catalytic</note>
    </ligand>
</feature>
<feature type="binding site" evidence="1">
    <location>
        <position position="82"/>
    </location>
    <ligand>
        <name>Mg(2+)</name>
        <dbReference type="ChEBI" id="CHEBI:18420"/>
        <note>catalytic</note>
    </ligand>
</feature>
<feature type="site" description="Interaction with DNA" evidence="1">
    <location>
        <position position="33"/>
    </location>
</feature>
<feature type="site" description="Interaction with DNA" evidence="1">
    <location>
        <position position="139"/>
    </location>
</feature>
<feature type="site" description="Interaction with DNA" evidence="1">
    <location>
        <position position="140"/>
    </location>
</feature>
<feature type="site" description="Interaction with DNA" evidence="1">
    <location>
        <position position="143"/>
    </location>
</feature>
<feature type="site" description="Interaction with DNA" evidence="1">
    <location>
        <position position="148"/>
    </location>
</feature>
<feature type="site" description="Interaction with DNA" evidence="1">
    <location>
        <position position="155"/>
    </location>
</feature>
<feature type="site" description="Interaction with DNA" evidence="1">
    <location>
        <position position="300"/>
    </location>
</feature>
<feature type="site" description="Interaction with DNA" evidence="1">
    <location>
        <position position="488"/>
    </location>
</feature>
<evidence type="ECO:0000255" key="1">
    <source>
        <dbReference type="HAMAP-Rule" id="MF_00952"/>
    </source>
</evidence>
<evidence type="ECO:0000255" key="2">
    <source>
        <dbReference type="PROSITE-ProRule" id="PRU01383"/>
    </source>
</evidence>
<evidence type="ECO:0000256" key="3">
    <source>
        <dbReference type="SAM" id="MobiDB-lite"/>
    </source>
</evidence>
<evidence type="ECO:0000305" key="4"/>
<reference key="1">
    <citation type="journal article" date="2006" name="Lancet">
        <title>Complete genome sequence of USA300, an epidemic clone of community-acquired meticillin-resistant Staphylococcus aureus.</title>
        <authorList>
            <person name="Diep B.A."/>
            <person name="Gill S.R."/>
            <person name="Chang R.F."/>
            <person name="Phan T.H."/>
            <person name="Chen J.H."/>
            <person name="Davidson M.G."/>
            <person name="Lin F."/>
            <person name="Lin J."/>
            <person name="Carleton H.A."/>
            <person name="Mongodin E.F."/>
            <person name="Sensabaugh G.F."/>
            <person name="Perdreau-Remington F."/>
        </authorList>
    </citation>
    <scope>NUCLEOTIDE SEQUENCE [LARGE SCALE GENOMIC DNA]</scope>
    <source>
        <strain>USA300</strain>
    </source>
</reference>
<dbReference type="EC" id="5.6.2.1" evidence="1"/>
<dbReference type="EMBL" id="CP000255">
    <property type="protein sequence ID" value="ABD21813.1"/>
    <property type="status" value="ALT_INIT"/>
    <property type="molecule type" value="Genomic_DNA"/>
</dbReference>
<dbReference type="SMR" id="Q2FHI8"/>
<dbReference type="KEGG" id="saa:SAUSA300_1143"/>
<dbReference type="HOGENOM" id="CLU_002929_4_3_9"/>
<dbReference type="Proteomes" id="UP000001939">
    <property type="component" value="Chromosome"/>
</dbReference>
<dbReference type="GO" id="GO:0005694">
    <property type="term" value="C:chromosome"/>
    <property type="evidence" value="ECO:0007669"/>
    <property type="project" value="InterPro"/>
</dbReference>
<dbReference type="GO" id="GO:0003677">
    <property type="term" value="F:DNA binding"/>
    <property type="evidence" value="ECO:0007669"/>
    <property type="project" value="UniProtKB-KW"/>
</dbReference>
<dbReference type="GO" id="GO:0003917">
    <property type="term" value="F:DNA topoisomerase type I (single strand cut, ATP-independent) activity"/>
    <property type="evidence" value="ECO:0007669"/>
    <property type="project" value="UniProtKB-UniRule"/>
</dbReference>
<dbReference type="GO" id="GO:0008270">
    <property type="term" value="F:zinc ion binding"/>
    <property type="evidence" value="ECO:0007669"/>
    <property type="project" value="UniProtKB-KW"/>
</dbReference>
<dbReference type="GO" id="GO:0006265">
    <property type="term" value="P:DNA topological change"/>
    <property type="evidence" value="ECO:0007669"/>
    <property type="project" value="UniProtKB-UniRule"/>
</dbReference>
<dbReference type="CDD" id="cd00186">
    <property type="entry name" value="TOP1Ac"/>
    <property type="match status" value="1"/>
</dbReference>
<dbReference type="CDD" id="cd03363">
    <property type="entry name" value="TOPRIM_TopoIA_TopoI"/>
    <property type="match status" value="1"/>
</dbReference>
<dbReference type="Gene3D" id="3.40.50.140">
    <property type="match status" value="1"/>
</dbReference>
<dbReference type="Gene3D" id="3.30.65.10">
    <property type="entry name" value="Bacterial Topoisomerase I, domain 1"/>
    <property type="match status" value="2"/>
</dbReference>
<dbReference type="Gene3D" id="1.10.460.10">
    <property type="entry name" value="Topoisomerase I, domain 2"/>
    <property type="match status" value="1"/>
</dbReference>
<dbReference type="Gene3D" id="2.70.20.10">
    <property type="entry name" value="Topoisomerase I, domain 3"/>
    <property type="match status" value="1"/>
</dbReference>
<dbReference type="Gene3D" id="1.10.290.10">
    <property type="entry name" value="Topoisomerase I, domain 4"/>
    <property type="match status" value="1"/>
</dbReference>
<dbReference type="HAMAP" id="MF_00952">
    <property type="entry name" value="Topoisom_1_prok"/>
    <property type="match status" value="1"/>
</dbReference>
<dbReference type="InterPro" id="IPR000380">
    <property type="entry name" value="Topo_IA"/>
</dbReference>
<dbReference type="InterPro" id="IPR003601">
    <property type="entry name" value="Topo_IA_2"/>
</dbReference>
<dbReference type="InterPro" id="IPR023406">
    <property type="entry name" value="Topo_IA_AS"/>
</dbReference>
<dbReference type="InterPro" id="IPR013497">
    <property type="entry name" value="Topo_IA_cen"/>
</dbReference>
<dbReference type="InterPro" id="IPR013824">
    <property type="entry name" value="Topo_IA_cen_sub1"/>
</dbReference>
<dbReference type="InterPro" id="IPR013825">
    <property type="entry name" value="Topo_IA_cen_sub2"/>
</dbReference>
<dbReference type="InterPro" id="IPR013826">
    <property type="entry name" value="Topo_IA_cen_sub3"/>
</dbReference>
<dbReference type="InterPro" id="IPR023405">
    <property type="entry name" value="Topo_IA_core_domain"/>
</dbReference>
<dbReference type="InterPro" id="IPR003602">
    <property type="entry name" value="Topo_IA_DNA-bd_dom"/>
</dbReference>
<dbReference type="InterPro" id="IPR013498">
    <property type="entry name" value="Topo_IA_Znf"/>
</dbReference>
<dbReference type="InterPro" id="IPR005733">
    <property type="entry name" value="TopoI_bac-type"/>
</dbReference>
<dbReference type="InterPro" id="IPR028612">
    <property type="entry name" value="Topoisom_1_IA"/>
</dbReference>
<dbReference type="InterPro" id="IPR006171">
    <property type="entry name" value="TOPRIM_dom"/>
</dbReference>
<dbReference type="InterPro" id="IPR034149">
    <property type="entry name" value="TOPRIM_TopoI"/>
</dbReference>
<dbReference type="NCBIfam" id="TIGR01051">
    <property type="entry name" value="topA_bact"/>
    <property type="match status" value="1"/>
</dbReference>
<dbReference type="PANTHER" id="PTHR42785:SF1">
    <property type="entry name" value="DNA TOPOISOMERASE"/>
    <property type="match status" value="1"/>
</dbReference>
<dbReference type="PANTHER" id="PTHR42785">
    <property type="entry name" value="DNA TOPOISOMERASE, TYPE IA, CORE"/>
    <property type="match status" value="1"/>
</dbReference>
<dbReference type="Pfam" id="PF01131">
    <property type="entry name" value="Topoisom_bac"/>
    <property type="match status" value="1"/>
</dbReference>
<dbReference type="Pfam" id="PF01751">
    <property type="entry name" value="Toprim"/>
    <property type="match status" value="1"/>
</dbReference>
<dbReference type="Pfam" id="PF01396">
    <property type="entry name" value="Zn_ribbon_Top1"/>
    <property type="match status" value="3"/>
</dbReference>
<dbReference type="PRINTS" id="PR00417">
    <property type="entry name" value="PRTPISMRASEI"/>
</dbReference>
<dbReference type="SMART" id="SM00437">
    <property type="entry name" value="TOP1Ac"/>
    <property type="match status" value="1"/>
</dbReference>
<dbReference type="SMART" id="SM00436">
    <property type="entry name" value="TOP1Bc"/>
    <property type="match status" value="1"/>
</dbReference>
<dbReference type="SMART" id="SM00493">
    <property type="entry name" value="TOPRIM"/>
    <property type="match status" value="1"/>
</dbReference>
<dbReference type="SUPFAM" id="SSF56712">
    <property type="entry name" value="Prokaryotic type I DNA topoisomerase"/>
    <property type="match status" value="1"/>
</dbReference>
<dbReference type="PROSITE" id="PS00396">
    <property type="entry name" value="TOPO_IA_1"/>
    <property type="match status" value="1"/>
</dbReference>
<dbReference type="PROSITE" id="PS52039">
    <property type="entry name" value="TOPO_IA_2"/>
    <property type="match status" value="1"/>
</dbReference>
<dbReference type="PROSITE" id="PS50880">
    <property type="entry name" value="TOPRIM"/>
    <property type="match status" value="1"/>
</dbReference>
<keyword id="KW-0238">DNA-binding</keyword>
<keyword id="KW-0413">Isomerase</keyword>
<keyword id="KW-0460">Magnesium</keyword>
<keyword id="KW-0479">Metal-binding</keyword>
<keyword id="KW-0677">Repeat</keyword>
<keyword id="KW-0799">Topoisomerase</keyword>
<keyword id="KW-0862">Zinc</keyword>
<keyword id="KW-0863">Zinc-finger</keyword>